<gene>
    <name type="primary">NUF2</name>
    <name type="synonym">CDCA1</name>
    <name type="ORF">RCJMB04_29i8</name>
</gene>
<name>NUF2_CHICK</name>
<comment type="function">
    <text evidence="1 3">Acts as a component of the essential kinetochore-associated NDC80 complex, which is required for chromosome segregation and spindle checkpoint activity (PubMed:12829748). Required for kinetochore integrity and the organization of stable microtubule binding sites in the outer plate of the kinetochore (By similarity). The NDC80 complex synergistically enhances the affinity of the SKA1 complex for microtubules and may allow the NDC80 complex to track depolymerizing microtubules (By similarity).</text>
</comment>
<comment type="subunit">
    <text>Component of the NDC80 complex, which is composed of at least NDC80/HEC1 and CDCA1.</text>
</comment>
<comment type="interaction">
    <interactant intactId="EBI-1003866">
        <id>Q76I90</id>
    </interactant>
    <interactant intactId="EBI-1003779">
        <id>Q76I89</id>
        <label>NDC80</label>
    </interactant>
    <organismsDiffer>false</organismsDiffer>
    <experiments>3</experiments>
</comment>
<comment type="subcellular location">
    <subcellularLocation>
        <location>Cytoplasm</location>
    </subcellularLocation>
    <subcellularLocation>
        <location>Nucleus</location>
    </subcellularLocation>
    <subcellularLocation>
        <location>Chromosome</location>
        <location>Centromere</location>
        <location>Kinetochore</location>
    </subcellularLocation>
    <subcellularLocation>
        <location>Cytoplasm</location>
        <location>Cytoskeleton</location>
        <location>Microtubule organizing center</location>
        <location>Centrosome</location>
    </subcellularLocation>
    <text>Localizes to kinetochores from late prophase to anaphase and to the centrosome during G1 and S phase.</text>
</comment>
<comment type="similarity">
    <text evidence="4">Belongs to the NUF2 family.</text>
</comment>
<feature type="chain" id="PRO_0000249816" description="Kinetochore protein Nuf2">
    <location>
        <begin position="1"/>
        <end position="469"/>
    </location>
</feature>
<feature type="coiled-coil region" evidence="2">
    <location>
        <begin position="135"/>
        <end position="444"/>
    </location>
</feature>
<feature type="sequence conflict" description="In Ref. 2; CAG32566." evidence="4" ref="2">
    <original>S</original>
    <variation>N</variation>
    <location>
        <position position="411"/>
    </location>
</feature>
<sequence>MEALTFPRYSPDDIVAYLRSHVLVGAEARNLTKADLFATLKPEVLHMIFIRILQKVYGIRLEHFYMMPVNVDIVYPQIFEGFLPVCNLYIHMERFLPVCRVNDFQMSDVINPKAKRTARFLSGILNFVHFRECRREAYLELQLNYKSAMEKHQQLETANQELEMKLEKLNTVPVEQQAEFKQLSDDIQELEQLLSHDYRRKTAALQEVISQKKSDITERTRKLNELKVTMATLKEEQEQLKSKIVESPEELKNYKELMKETVKKLKKSKQEVIEKYEGYRDLVEVLPSCQLEVQLYQKKMERQAANVERLASVLSEVRNLEDQLESAQIELKKGKTDEMSLKRLVTAKHERLSTAEIRIKKKREDVEQYKHTVFEYFNRVQEKRGVVYDKVTAIQKEIQQMRFKIQQLNESAEEEEMKAKEIYQNLKAGLEKRHDSLIKTAKNYAASREDKIAELQKGLLRVQSPGSSS</sequence>
<dbReference type="EMBL" id="AB098621">
    <property type="protein sequence ID" value="BAC81641.1"/>
    <property type="molecule type" value="mRNA"/>
</dbReference>
<dbReference type="EMBL" id="AJ720907">
    <property type="protein sequence ID" value="CAG32566.1"/>
    <property type="molecule type" value="mRNA"/>
</dbReference>
<dbReference type="RefSeq" id="NP_989809.2">
    <property type="nucleotide sequence ID" value="NM_204478.3"/>
</dbReference>
<dbReference type="SMR" id="Q76I90"/>
<dbReference type="BioGRID" id="675432">
    <property type="interactions" value="2"/>
</dbReference>
<dbReference type="FunCoup" id="Q76I90">
    <property type="interactions" value="389"/>
</dbReference>
<dbReference type="IntAct" id="Q76I90">
    <property type="interactions" value="3"/>
</dbReference>
<dbReference type="STRING" id="9031.ENSGALP00000038992"/>
<dbReference type="PaxDb" id="9031-ENSGALP00000038992"/>
<dbReference type="GeneID" id="395135"/>
<dbReference type="KEGG" id="gga:395135"/>
<dbReference type="CTD" id="83540"/>
<dbReference type="VEuPathDB" id="HostDB:geneid_395135"/>
<dbReference type="eggNOG" id="KOG4438">
    <property type="taxonomic scope" value="Eukaryota"/>
</dbReference>
<dbReference type="HOGENOM" id="CLU_589957_0_0_1"/>
<dbReference type="InParanoid" id="Q76I90"/>
<dbReference type="OrthoDB" id="8194677at2759"/>
<dbReference type="PhylomeDB" id="Q76I90"/>
<dbReference type="TreeFam" id="TF101067"/>
<dbReference type="PRO" id="PR:Q76I90"/>
<dbReference type="Proteomes" id="UP000000539">
    <property type="component" value="Unassembled WGS sequence"/>
</dbReference>
<dbReference type="GO" id="GO:0005813">
    <property type="term" value="C:centrosome"/>
    <property type="evidence" value="ECO:0007669"/>
    <property type="project" value="UniProtKB-SubCell"/>
</dbReference>
<dbReference type="GO" id="GO:0005737">
    <property type="term" value="C:cytoplasm"/>
    <property type="evidence" value="ECO:0007669"/>
    <property type="project" value="UniProtKB-SubCell"/>
</dbReference>
<dbReference type="GO" id="GO:0031262">
    <property type="term" value="C:Ndc80 complex"/>
    <property type="evidence" value="ECO:0000250"/>
    <property type="project" value="UniProtKB"/>
</dbReference>
<dbReference type="GO" id="GO:0005634">
    <property type="term" value="C:nucleus"/>
    <property type="evidence" value="ECO:0007669"/>
    <property type="project" value="UniProtKB-SubCell"/>
</dbReference>
<dbReference type="GO" id="GO:0008017">
    <property type="term" value="F:microtubule binding"/>
    <property type="evidence" value="ECO:0000250"/>
    <property type="project" value="UniProtKB"/>
</dbReference>
<dbReference type="GO" id="GO:0044877">
    <property type="term" value="F:protein-containing complex binding"/>
    <property type="evidence" value="ECO:0000318"/>
    <property type="project" value="GO_Central"/>
</dbReference>
<dbReference type="GO" id="GO:0051315">
    <property type="term" value="P:attachment of mitotic spindle microtubules to kinetochore"/>
    <property type="evidence" value="ECO:0000318"/>
    <property type="project" value="GO_Central"/>
</dbReference>
<dbReference type="GO" id="GO:0051301">
    <property type="term" value="P:cell division"/>
    <property type="evidence" value="ECO:0007669"/>
    <property type="project" value="UniProtKB-KW"/>
</dbReference>
<dbReference type="GO" id="GO:0051383">
    <property type="term" value="P:kinetochore organization"/>
    <property type="evidence" value="ECO:0000318"/>
    <property type="project" value="GO_Central"/>
</dbReference>
<dbReference type="GO" id="GO:0045132">
    <property type="term" value="P:meiotic chromosome segregation"/>
    <property type="evidence" value="ECO:0000318"/>
    <property type="project" value="GO_Central"/>
</dbReference>
<dbReference type="GO" id="GO:0007052">
    <property type="term" value="P:mitotic spindle organization"/>
    <property type="evidence" value="ECO:0000318"/>
    <property type="project" value="GO_Central"/>
</dbReference>
<dbReference type="FunFam" id="1.10.418.60:FF:000001">
    <property type="entry name" value="NDC80 kinetochore complex component NUF2"/>
    <property type="match status" value="1"/>
</dbReference>
<dbReference type="Gene3D" id="1.10.418.60">
    <property type="entry name" value="Ncd80 complex, Nuf2 subunit"/>
    <property type="match status" value="1"/>
</dbReference>
<dbReference type="InterPro" id="IPR005549">
    <property type="entry name" value="Kinetochore_Nuf2_N"/>
</dbReference>
<dbReference type="InterPro" id="IPR038275">
    <property type="entry name" value="Nuf2_N_sf"/>
</dbReference>
<dbReference type="PANTHER" id="PTHR21650:SF2">
    <property type="entry name" value="KINETOCHORE PROTEIN NUF2"/>
    <property type="match status" value="1"/>
</dbReference>
<dbReference type="PANTHER" id="PTHR21650">
    <property type="entry name" value="MEMBRALIN/KINETOCHORE PROTEIN NUF2"/>
    <property type="match status" value="1"/>
</dbReference>
<dbReference type="Pfam" id="PF03800">
    <property type="entry name" value="Nuf2"/>
    <property type="match status" value="1"/>
</dbReference>
<organism>
    <name type="scientific">Gallus gallus</name>
    <name type="common">Chicken</name>
    <dbReference type="NCBI Taxonomy" id="9031"/>
    <lineage>
        <taxon>Eukaryota</taxon>
        <taxon>Metazoa</taxon>
        <taxon>Chordata</taxon>
        <taxon>Craniata</taxon>
        <taxon>Vertebrata</taxon>
        <taxon>Euteleostomi</taxon>
        <taxon>Archelosauria</taxon>
        <taxon>Archosauria</taxon>
        <taxon>Dinosauria</taxon>
        <taxon>Saurischia</taxon>
        <taxon>Theropoda</taxon>
        <taxon>Coelurosauria</taxon>
        <taxon>Aves</taxon>
        <taxon>Neognathae</taxon>
        <taxon>Galloanserae</taxon>
        <taxon>Galliformes</taxon>
        <taxon>Phasianidae</taxon>
        <taxon>Phasianinae</taxon>
        <taxon>Gallus</taxon>
    </lineage>
</organism>
<proteinExistence type="evidence at protein level"/>
<protein>
    <recommendedName>
        <fullName>Kinetochore protein Nuf2</fullName>
    </recommendedName>
    <alternativeName>
        <fullName>Cell division cycle-associated protein 1</fullName>
    </alternativeName>
</protein>
<evidence type="ECO:0000250" key="1">
    <source>
        <dbReference type="UniProtKB" id="Q9BZD4"/>
    </source>
</evidence>
<evidence type="ECO:0000255" key="2"/>
<evidence type="ECO:0000269" key="3">
    <source>
    </source>
</evidence>
<evidence type="ECO:0000305" key="4"/>
<reference key="1">
    <citation type="journal article" date="2003" name="J. Cell Sci.">
        <title>Dynamic behavior of Nuf2-Hec1 complex that localizes to the centrosome and centromere and is essential for mitotic progression in vertebrate cells.</title>
        <authorList>
            <person name="Hori T."/>
            <person name="Haraguchi T."/>
            <person name="Hiraoka Y."/>
            <person name="Kimura H."/>
            <person name="Fukagawa T."/>
        </authorList>
    </citation>
    <scope>NUCLEOTIDE SEQUENCE [MRNA]</scope>
    <scope>FUNCTION</scope>
    <scope>INTERACTION WITH NDC80</scope>
    <scope>SUBCELLULAR LOCATION</scope>
</reference>
<reference key="2">
    <citation type="journal article" date="2005" name="Genome Biol.">
        <title>Full-length cDNAs from chicken bursal lymphocytes to facilitate gene function analysis.</title>
        <authorList>
            <person name="Caldwell R.B."/>
            <person name="Kierzek A.M."/>
            <person name="Arakawa H."/>
            <person name="Bezzubov Y."/>
            <person name="Zaim J."/>
            <person name="Fiedler P."/>
            <person name="Kutter S."/>
            <person name="Blagodatski A."/>
            <person name="Kostovska D."/>
            <person name="Koter M."/>
            <person name="Plachy J."/>
            <person name="Carninci P."/>
            <person name="Hayashizaki Y."/>
            <person name="Buerstedde J.-M."/>
        </authorList>
    </citation>
    <scope>NUCLEOTIDE SEQUENCE [LARGE SCALE MRNA]</scope>
    <source>
        <strain>CB</strain>
        <tissue>Bursa of Fabricius</tissue>
    </source>
</reference>
<reference key="3">
    <citation type="journal article" date="2005" name="Mol. Cell. Biol.">
        <title>The functional region of CENP-H interacts with the Nuf2 complex that localizes to centromere during mitosis.</title>
        <authorList>
            <person name="Mikami Y."/>
            <person name="Hori T."/>
            <person name="Kimura H."/>
            <person name="Fukagawa T."/>
        </authorList>
    </citation>
    <scope>INTERACTION WITH CENPH</scope>
</reference>
<reference key="4">
    <citation type="journal article" date="2005" name="Mol. Cell. Biol.">
        <title>CENP-A is required for accurate chromosome segregation and sustained kinetochore association of BubR1.</title>
        <authorList>
            <person name="Regnier V."/>
            <person name="Vagnarelli P."/>
            <person name="Fukagawa T."/>
            <person name="Zerjal T."/>
            <person name="Burns E."/>
            <person name="Trouche D."/>
            <person name="Earnshaw W."/>
            <person name="Brown W."/>
        </authorList>
    </citation>
    <scope>SUBCELLULAR LOCATION</scope>
</reference>
<keyword id="KW-0131">Cell cycle</keyword>
<keyword id="KW-0132">Cell division</keyword>
<keyword id="KW-0137">Centromere</keyword>
<keyword id="KW-0158">Chromosome</keyword>
<keyword id="KW-0175">Coiled coil</keyword>
<keyword id="KW-0963">Cytoplasm</keyword>
<keyword id="KW-0206">Cytoskeleton</keyword>
<keyword id="KW-0995">Kinetochore</keyword>
<keyword id="KW-0498">Mitosis</keyword>
<keyword id="KW-0539">Nucleus</keyword>
<keyword id="KW-1185">Reference proteome</keyword>
<accession>Q76I90</accession>
<accession>Q5ZI77</accession>